<name>SYH_CHRSD</name>
<protein>
    <recommendedName>
        <fullName evidence="1">Histidine--tRNA ligase</fullName>
        <ecNumber evidence="1">6.1.1.21</ecNumber>
    </recommendedName>
    <alternativeName>
        <fullName evidence="1">Histidyl-tRNA synthetase</fullName>
        <shortName evidence="1">HisRS</shortName>
    </alternativeName>
</protein>
<accession>Q1QTK7</accession>
<dbReference type="EC" id="6.1.1.21" evidence="1"/>
<dbReference type="EMBL" id="CP000285">
    <property type="protein sequence ID" value="ABE60201.1"/>
    <property type="molecule type" value="Genomic_DNA"/>
</dbReference>
<dbReference type="RefSeq" id="WP_011508147.1">
    <property type="nucleotide sequence ID" value="NC_007963.1"/>
</dbReference>
<dbReference type="SMR" id="Q1QTK7"/>
<dbReference type="STRING" id="290398.Csal_2855"/>
<dbReference type="GeneID" id="95335550"/>
<dbReference type="KEGG" id="csa:Csal_2855"/>
<dbReference type="eggNOG" id="COG0124">
    <property type="taxonomic scope" value="Bacteria"/>
</dbReference>
<dbReference type="HOGENOM" id="CLU_025113_1_1_6"/>
<dbReference type="OrthoDB" id="9800814at2"/>
<dbReference type="Proteomes" id="UP000000239">
    <property type="component" value="Chromosome"/>
</dbReference>
<dbReference type="GO" id="GO:0005737">
    <property type="term" value="C:cytoplasm"/>
    <property type="evidence" value="ECO:0007669"/>
    <property type="project" value="UniProtKB-SubCell"/>
</dbReference>
<dbReference type="GO" id="GO:0005524">
    <property type="term" value="F:ATP binding"/>
    <property type="evidence" value="ECO:0007669"/>
    <property type="project" value="UniProtKB-UniRule"/>
</dbReference>
<dbReference type="GO" id="GO:0004821">
    <property type="term" value="F:histidine-tRNA ligase activity"/>
    <property type="evidence" value="ECO:0007669"/>
    <property type="project" value="UniProtKB-UniRule"/>
</dbReference>
<dbReference type="GO" id="GO:0006427">
    <property type="term" value="P:histidyl-tRNA aminoacylation"/>
    <property type="evidence" value="ECO:0007669"/>
    <property type="project" value="UniProtKB-UniRule"/>
</dbReference>
<dbReference type="CDD" id="cd00773">
    <property type="entry name" value="HisRS-like_core"/>
    <property type="match status" value="1"/>
</dbReference>
<dbReference type="CDD" id="cd00859">
    <property type="entry name" value="HisRS_anticodon"/>
    <property type="match status" value="1"/>
</dbReference>
<dbReference type="FunFam" id="3.30.930.10:FF:000005">
    <property type="entry name" value="Histidine--tRNA ligase"/>
    <property type="match status" value="1"/>
</dbReference>
<dbReference type="Gene3D" id="3.40.50.800">
    <property type="entry name" value="Anticodon-binding domain"/>
    <property type="match status" value="1"/>
</dbReference>
<dbReference type="Gene3D" id="3.30.930.10">
    <property type="entry name" value="Bira Bifunctional Protein, Domain 2"/>
    <property type="match status" value="1"/>
</dbReference>
<dbReference type="HAMAP" id="MF_00127">
    <property type="entry name" value="His_tRNA_synth"/>
    <property type="match status" value="1"/>
</dbReference>
<dbReference type="InterPro" id="IPR006195">
    <property type="entry name" value="aa-tRNA-synth_II"/>
</dbReference>
<dbReference type="InterPro" id="IPR045864">
    <property type="entry name" value="aa-tRNA-synth_II/BPL/LPL"/>
</dbReference>
<dbReference type="InterPro" id="IPR004154">
    <property type="entry name" value="Anticodon-bd"/>
</dbReference>
<dbReference type="InterPro" id="IPR036621">
    <property type="entry name" value="Anticodon-bd_dom_sf"/>
</dbReference>
<dbReference type="InterPro" id="IPR015807">
    <property type="entry name" value="His-tRNA-ligase"/>
</dbReference>
<dbReference type="InterPro" id="IPR041715">
    <property type="entry name" value="HisRS-like_core"/>
</dbReference>
<dbReference type="InterPro" id="IPR004516">
    <property type="entry name" value="HisRS/HisZ"/>
</dbReference>
<dbReference type="InterPro" id="IPR033656">
    <property type="entry name" value="HisRS_anticodon"/>
</dbReference>
<dbReference type="NCBIfam" id="TIGR00442">
    <property type="entry name" value="hisS"/>
    <property type="match status" value="1"/>
</dbReference>
<dbReference type="PANTHER" id="PTHR43707:SF1">
    <property type="entry name" value="HISTIDINE--TRNA LIGASE, MITOCHONDRIAL-RELATED"/>
    <property type="match status" value="1"/>
</dbReference>
<dbReference type="PANTHER" id="PTHR43707">
    <property type="entry name" value="HISTIDYL-TRNA SYNTHETASE"/>
    <property type="match status" value="1"/>
</dbReference>
<dbReference type="Pfam" id="PF03129">
    <property type="entry name" value="HGTP_anticodon"/>
    <property type="match status" value="1"/>
</dbReference>
<dbReference type="Pfam" id="PF13393">
    <property type="entry name" value="tRNA-synt_His"/>
    <property type="match status" value="1"/>
</dbReference>
<dbReference type="PIRSF" id="PIRSF001549">
    <property type="entry name" value="His-tRNA_synth"/>
    <property type="match status" value="1"/>
</dbReference>
<dbReference type="SUPFAM" id="SSF52954">
    <property type="entry name" value="Class II aaRS ABD-related"/>
    <property type="match status" value="1"/>
</dbReference>
<dbReference type="SUPFAM" id="SSF55681">
    <property type="entry name" value="Class II aaRS and biotin synthetases"/>
    <property type="match status" value="1"/>
</dbReference>
<dbReference type="PROSITE" id="PS50862">
    <property type="entry name" value="AA_TRNA_LIGASE_II"/>
    <property type="match status" value="1"/>
</dbReference>
<feature type="chain" id="PRO_1000016341" description="Histidine--tRNA ligase">
    <location>
        <begin position="1"/>
        <end position="428"/>
    </location>
</feature>
<sequence>MSNKIQAIRGMNDLLPEQSPVWQYFERQIQHLMQRYGYNEIRTPILEQTALFKRSIGEVTDIVEKEMYTFEDRNGDSLTLRPEGTASCVRAALENGLLYNQTQRLWYQGPMFRHERPQKGRYRQFHQVGVEAYGMLGPDIDFEMILLSARLWDALGLMPHVRLELNSLGSSEARAAYRDALVAYFEAHAEVLDEDSRRRLTSNPLRILDSKNPDMAEMLEAAPRLMDHLDDESRAHFEQLTAMLDAAGIDYVINPRLVRGLDYYSRTVFEWTTQALGSQGTVCAGGRYDGLVEQLGGKPTPGVGFAMGVERLILLLETLDLVPEAARSRPDVYLTAMGDTASREAMLLGEHLRDALPEMHLQVHCGGGSFKSQIKKADKSGARIALMLGDDEIASGSVGIKFLREDREQESVAREALAARLQALLAED</sequence>
<keyword id="KW-0030">Aminoacyl-tRNA synthetase</keyword>
<keyword id="KW-0067">ATP-binding</keyword>
<keyword id="KW-0963">Cytoplasm</keyword>
<keyword id="KW-0436">Ligase</keyword>
<keyword id="KW-0547">Nucleotide-binding</keyword>
<keyword id="KW-0648">Protein biosynthesis</keyword>
<keyword id="KW-1185">Reference proteome</keyword>
<organism>
    <name type="scientific">Chromohalobacter salexigens (strain ATCC BAA-138 / DSM 3043 / CIP 106854 / NCIMB 13768 / 1H11)</name>
    <dbReference type="NCBI Taxonomy" id="290398"/>
    <lineage>
        <taxon>Bacteria</taxon>
        <taxon>Pseudomonadati</taxon>
        <taxon>Pseudomonadota</taxon>
        <taxon>Gammaproteobacteria</taxon>
        <taxon>Oceanospirillales</taxon>
        <taxon>Halomonadaceae</taxon>
        <taxon>Chromohalobacter</taxon>
    </lineage>
</organism>
<comment type="catalytic activity">
    <reaction evidence="1">
        <text>tRNA(His) + L-histidine + ATP = L-histidyl-tRNA(His) + AMP + diphosphate + H(+)</text>
        <dbReference type="Rhea" id="RHEA:17313"/>
        <dbReference type="Rhea" id="RHEA-COMP:9665"/>
        <dbReference type="Rhea" id="RHEA-COMP:9689"/>
        <dbReference type="ChEBI" id="CHEBI:15378"/>
        <dbReference type="ChEBI" id="CHEBI:30616"/>
        <dbReference type="ChEBI" id="CHEBI:33019"/>
        <dbReference type="ChEBI" id="CHEBI:57595"/>
        <dbReference type="ChEBI" id="CHEBI:78442"/>
        <dbReference type="ChEBI" id="CHEBI:78527"/>
        <dbReference type="ChEBI" id="CHEBI:456215"/>
        <dbReference type="EC" id="6.1.1.21"/>
    </reaction>
</comment>
<comment type="subunit">
    <text evidence="1">Homodimer.</text>
</comment>
<comment type="subcellular location">
    <subcellularLocation>
        <location evidence="1">Cytoplasm</location>
    </subcellularLocation>
</comment>
<comment type="similarity">
    <text evidence="1">Belongs to the class-II aminoacyl-tRNA synthetase family.</text>
</comment>
<proteinExistence type="inferred from homology"/>
<evidence type="ECO:0000255" key="1">
    <source>
        <dbReference type="HAMAP-Rule" id="MF_00127"/>
    </source>
</evidence>
<reference key="1">
    <citation type="journal article" date="2011" name="Stand. Genomic Sci.">
        <title>Complete genome sequence of the halophilic and highly halotolerant Chromohalobacter salexigens type strain (1H11(T)).</title>
        <authorList>
            <person name="Copeland A."/>
            <person name="O'Connor K."/>
            <person name="Lucas S."/>
            <person name="Lapidus A."/>
            <person name="Berry K.W."/>
            <person name="Detter J.C."/>
            <person name="Del Rio T.G."/>
            <person name="Hammon N."/>
            <person name="Dalin E."/>
            <person name="Tice H."/>
            <person name="Pitluck S."/>
            <person name="Bruce D."/>
            <person name="Goodwin L."/>
            <person name="Han C."/>
            <person name="Tapia R."/>
            <person name="Saunders E."/>
            <person name="Schmutz J."/>
            <person name="Brettin T."/>
            <person name="Larimer F."/>
            <person name="Land M."/>
            <person name="Hauser L."/>
            <person name="Vargas C."/>
            <person name="Nieto J.J."/>
            <person name="Kyrpides N.C."/>
            <person name="Ivanova N."/>
            <person name="Goker M."/>
            <person name="Klenk H.P."/>
            <person name="Csonka L.N."/>
            <person name="Woyke T."/>
        </authorList>
    </citation>
    <scope>NUCLEOTIDE SEQUENCE [LARGE SCALE GENOMIC DNA]</scope>
    <source>
        <strain>ATCC BAA-138 / DSM 3043 / CIP 106854 / NCIMB 13768 / 1H11</strain>
    </source>
</reference>
<gene>
    <name evidence="1" type="primary">hisS</name>
    <name type="ordered locus">Csal_2855</name>
</gene>